<evidence type="ECO:0000255" key="1"/>
<evidence type="ECO:0000269" key="2">
    <source>
    </source>
</evidence>
<evidence type="ECO:0000269" key="3">
    <source>
    </source>
</evidence>
<evidence type="ECO:0000269" key="4">
    <source>
    </source>
</evidence>
<evidence type="ECO:0000305" key="5"/>
<gene>
    <name type="primary">albB</name>
    <name type="synonym">ywhR</name>
    <name type="ordered locus">BSU37380</name>
</gene>
<sequence length="53" mass="6116">MSPAQRRILLYILSFIFVIGAVVYFVKSDYLFTLIFIAIAILFGMRARKADSR</sequence>
<feature type="chain" id="PRO_0000064543" description="Antilisterial bacteriocin subtilosin biosynthesis protein AlbB">
    <location>
        <begin position="1"/>
        <end position="53"/>
    </location>
</feature>
<feature type="transmembrane region" description="Helical" evidence="1">
    <location>
        <begin position="8"/>
        <end position="28"/>
    </location>
</feature>
<feature type="transmembrane region" description="Helical" evidence="1">
    <location>
        <begin position="30"/>
        <end position="50"/>
    </location>
</feature>
<protein>
    <recommendedName>
        <fullName>Antilisterial bacteriocin subtilosin biosynthesis protein AlbB</fullName>
    </recommendedName>
</protein>
<comment type="function">
    <text evidence="2 3">Involved in the production of the bacteriocin subtilosin. Required for maximal production and for optimal immunity to subtilosin.</text>
</comment>
<comment type="subcellular location">
    <subcellularLocation>
        <location evidence="5">Cell membrane</location>
        <topology evidence="5">Multi-pass membrane protein</topology>
    </subcellularLocation>
</comment>
<comment type="induction">
    <text evidence="4">Transcription is highly induced by oxygen limitation and is under dual and independent control of Spo0A-AbrB and ResDE.</text>
</comment>
<reference key="1">
    <citation type="submission" date="2002-02" db="EMBL/GenBank/DDBJ databases">
        <title>Subtilosin A biosynthesis is conserved among two different classes of Bacillus subtilis strains.</title>
        <authorList>
            <person name="Stein T."/>
            <person name="Duesterhus S."/>
            <person name="Entian K.-D."/>
        </authorList>
    </citation>
    <scope>NUCLEOTIDE SEQUENCE [GENOMIC DNA]</scope>
    <source>
        <strain>ATCC 6633 / PCI 219 / NRS 231</strain>
    </source>
</reference>
<reference key="2">
    <citation type="journal article" date="1997" name="Microbiology">
        <title>The Bacillus subtilis genome from gerBC (311 degrees) to licR (334 degrees).</title>
        <authorList>
            <person name="Presecan E."/>
            <person name="Moszer I."/>
            <person name="Boursier L."/>
            <person name="Cruz Ramos H."/>
            <person name="De La Fuente V."/>
            <person name="Hullo M.-F."/>
            <person name="Lelong C."/>
            <person name="Schleich S."/>
            <person name="Sekowska A."/>
            <person name="Song B.H."/>
            <person name="Villani G."/>
            <person name="Kunst F."/>
            <person name="Danchin A."/>
            <person name="Glaser P."/>
        </authorList>
    </citation>
    <scope>NUCLEOTIDE SEQUENCE [GENOMIC DNA]</scope>
    <source>
        <strain>168</strain>
    </source>
</reference>
<reference key="3">
    <citation type="journal article" date="1997" name="Nature">
        <title>The complete genome sequence of the Gram-positive bacterium Bacillus subtilis.</title>
        <authorList>
            <person name="Kunst F."/>
            <person name="Ogasawara N."/>
            <person name="Moszer I."/>
            <person name="Albertini A.M."/>
            <person name="Alloni G."/>
            <person name="Azevedo V."/>
            <person name="Bertero M.G."/>
            <person name="Bessieres P."/>
            <person name="Bolotin A."/>
            <person name="Borchert S."/>
            <person name="Borriss R."/>
            <person name="Boursier L."/>
            <person name="Brans A."/>
            <person name="Braun M."/>
            <person name="Brignell S.C."/>
            <person name="Bron S."/>
            <person name="Brouillet S."/>
            <person name="Bruschi C.V."/>
            <person name="Caldwell B."/>
            <person name="Capuano V."/>
            <person name="Carter N.M."/>
            <person name="Choi S.-K."/>
            <person name="Codani J.-J."/>
            <person name="Connerton I.F."/>
            <person name="Cummings N.J."/>
            <person name="Daniel R.A."/>
            <person name="Denizot F."/>
            <person name="Devine K.M."/>
            <person name="Duesterhoeft A."/>
            <person name="Ehrlich S.D."/>
            <person name="Emmerson P.T."/>
            <person name="Entian K.-D."/>
            <person name="Errington J."/>
            <person name="Fabret C."/>
            <person name="Ferrari E."/>
            <person name="Foulger D."/>
            <person name="Fritz C."/>
            <person name="Fujita M."/>
            <person name="Fujita Y."/>
            <person name="Fuma S."/>
            <person name="Galizzi A."/>
            <person name="Galleron N."/>
            <person name="Ghim S.-Y."/>
            <person name="Glaser P."/>
            <person name="Goffeau A."/>
            <person name="Golightly E.J."/>
            <person name="Grandi G."/>
            <person name="Guiseppi G."/>
            <person name="Guy B.J."/>
            <person name="Haga K."/>
            <person name="Haiech J."/>
            <person name="Harwood C.R."/>
            <person name="Henaut A."/>
            <person name="Hilbert H."/>
            <person name="Holsappel S."/>
            <person name="Hosono S."/>
            <person name="Hullo M.-F."/>
            <person name="Itaya M."/>
            <person name="Jones L.-M."/>
            <person name="Joris B."/>
            <person name="Karamata D."/>
            <person name="Kasahara Y."/>
            <person name="Klaerr-Blanchard M."/>
            <person name="Klein C."/>
            <person name="Kobayashi Y."/>
            <person name="Koetter P."/>
            <person name="Koningstein G."/>
            <person name="Krogh S."/>
            <person name="Kumano M."/>
            <person name="Kurita K."/>
            <person name="Lapidus A."/>
            <person name="Lardinois S."/>
            <person name="Lauber J."/>
            <person name="Lazarevic V."/>
            <person name="Lee S.-M."/>
            <person name="Levine A."/>
            <person name="Liu H."/>
            <person name="Masuda S."/>
            <person name="Mauel C."/>
            <person name="Medigue C."/>
            <person name="Medina N."/>
            <person name="Mellado R.P."/>
            <person name="Mizuno M."/>
            <person name="Moestl D."/>
            <person name="Nakai S."/>
            <person name="Noback M."/>
            <person name="Noone D."/>
            <person name="O'Reilly M."/>
            <person name="Ogawa K."/>
            <person name="Ogiwara A."/>
            <person name="Oudega B."/>
            <person name="Park S.-H."/>
            <person name="Parro V."/>
            <person name="Pohl T.M."/>
            <person name="Portetelle D."/>
            <person name="Porwollik S."/>
            <person name="Prescott A.M."/>
            <person name="Presecan E."/>
            <person name="Pujic P."/>
            <person name="Purnelle B."/>
            <person name="Rapoport G."/>
            <person name="Rey M."/>
            <person name="Reynolds S."/>
            <person name="Rieger M."/>
            <person name="Rivolta C."/>
            <person name="Rocha E."/>
            <person name="Roche B."/>
            <person name="Rose M."/>
            <person name="Sadaie Y."/>
            <person name="Sato T."/>
            <person name="Scanlan E."/>
            <person name="Schleich S."/>
            <person name="Schroeter R."/>
            <person name="Scoffone F."/>
            <person name="Sekiguchi J."/>
            <person name="Sekowska A."/>
            <person name="Seror S.J."/>
            <person name="Serror P."/>
            <person name="Shin B.-S."/>
            <person name="Soldo B."/>
            <person name="Sorokin A."/>
            <person name="Tacconi E."/>
            <person name="Takagi T."/>
            <person name="Takahashi H."/>
            <person name="Takemaru K."/>
            <person name="Takeuchi M."/>
            <person name="Tamakoshi A."/>
            <person name="Tanaka T."/>
            <person name="Terpstra P."/>
            <person name="Tognoni A."/>
            <person name="Tosato V."/>
            <person name="Uchiyama S."/>
            <person name="Vandenbol M."/>
            <person name="Vannier F."/>
            <person name="Vassarotti A."/>
            <person name="Viari A."/>
            <person name="Wambutt R."/>
            <person name="Wedler E."/>
            <person name="Wedler H."/>
            <person name="Weitzenegger T."/>
            <person name="Winters P."/>
            <person name="Wipat A."/>
            <person name="Yamamoto H."/>
            <person name="Yamane K."/>
            <person name="Yasumoto K."/>
            <person name="Yata K."/>
            <person name="Yoshida K."/>
            <person name="Yoshikawa H.-F."/>
            <person name="Zumstein E."/>
            <person name="Yoshikawa H."/>
            <person name="Danchin A."/>
        </authorList>
    </citation>
    <scope>NUCLEOTIDE SEQUENCE [LARGE SCALE GENOMIC DNA]</scope>
    <source>
        <strain>168</strain>
    </source>
</reference>
<reference key="4">
    <citation type="journal article" date="1999" name="J. Bacteriol.">
        <title>Genes of the sbo-alb locus of Bacillus subtilis are required for production of the antilisterial bacteriocin subtilosin.</title>
        <authorList>
            <person name="Zheng G."/>
            <person name="Yan L.Z."/>
            <person name="Vederas J.C."/>
            <person name="Zuber P."/>
        </authorList>
    </citation>
    <scope>FUNCTION</scope>
    <source>
        <strain>168 / JH642</strain>
        <strain>22a</strain>
    </source>
</reference>
<reference key="5">
    <citation type="journal article" date="2000" name="J. Bacteriol.">
        <title>Mutational analysis of the sbo-alb locus of Bacillus subtilis: identification of genes required for subtilosin production and immunity.</title>
        <authorList>
            <person name="Zheng G."/>
            <person name="Hehn R."/>
            <person name="Zuber P."/>
        </authorList>
    </citation>
    <scope>FUNCTION</scope>
    <source>
        <strain>168 / JH642</strain>
    </source>
</reference>
<reference key="6">
    <citation type="journal article" date="2000" name="J. Bacteriol.">
        <title>Dual control of sbo-alb operon expression by the Spo0 and ResDE systems of signal transduction under anaerobic conditions in Bacillus subtilis.</title>
        <authorList>
            <person name="Nakano M.M."/>
            <person name="Zheng G."/>
            <person name="Zuber P."/>
        </authorList>
    </citation>
    <scope>TRANSCRIPTIONAL REGULATION</scope>
    <source>
        <strain>168 / JH642</strain>
    </source>
</reference>
<name>ALBB_BACSU</name>
<proteinExistence type="evidence at transcript level"/>
<organism>
    <name type="scientific">Bacillus subtilis (strain 168)</name>
    <dbReference type="NCBI Taxonomy" id="224308"/>
    <lineage>
        <taxon>Bacteria</taxon>
        <taxon>Bacillati</taxon>
        <taxon>Bacillota</taxon>
        <taxon>Bacilli</taxon>
        <taxon>Bacillales</taxon>
        <taxon>Bacillaceae</taxon>
        <taxon>Bacillus</taxon>
    </lineage>
</organism>
<keyword id="KW-0045">Antibiotic biosynthesis</keyword>
<keyword id="KW-0871">Bacteriocin biosynthesis</keyword>
<keyword id="KW-0079">Bacteriocin immunity</keyword>
<keyword id="KW-1003">Cell membrane</keyword>
<keyword id="KW-0472">Membrane</keyword>
<keyword id="KW-1185">Reference proteome</keyword>
<keyword id="KW-0812">Transmembrane</keyword>
<keyword id="KW-1133">Transmembrane helix</keyword>
<accession>P71010</accession>
<dbReference type="EMBL" id="AJ430547">
    <property type="protein sequence ID" value="CAD23200.1"/>
    <property type="molecule type" value="Genomic_DNA"/>
</dbReference>
<dbReference type="EMBL" id="Z80360">
    <property type="protein sequence ID" value="CAB02508.1"/>
    <property type="molecule type" value="Genomic_DNA"/>
</dbReference>
<dbReference type="EMBL" id="AL009126">
    <property type="protein sequence ID" value="CAB15765.1"/>
    <property type="molecule type" value="Genomic_DNA"/>
</dbReference>
<dbReference type="PIR" id="A70059">
    <property type="entry name" value="A70059"/>
</dbReference>
<dbReference type="RefSeq" id="NP_391618.1">
    <property type="nucleotide sequence ID" value="NC_000964.3"/>
</dbReference>
<dbReference type="RefSeq" id="WP_003222006.1">
    <property type="nucleotide sequence ID" value="NZ_OZ025638.1"/>
</dbReference>
<dbReference type="SMR" id="P71010"/>
<dbReference type="FunCoup" id="P71010">
    <property type="interactions" value="12"/>
</dbReference>
<dbReference type="STRING" id="224308.BSU37380"/>
<dbReference type="PaxDb" id="224308-BSU37380"/>
<dbReference type="EnsemblBacteria" id="CAB15765">
    <property type="protein sequence ID" value="CAB15765"/>
    <property type="gene ID" value="BSU_37380"/>
</dbReference>
<dbReference type="GeneID" id="86871641"/>
<dbReference type="GeneID" id="937057"/>
<dbReference type="KEGG" id="bsu:BSU37380"/>
<dbReference type="PATRIC" id="fig|224308.179.peg.4048"/>
<dbReference type="InParanoid" id="P71010"/>
<dbReference type="OrthoDB" id="2932813at2"/>
<dbReference type="BioCyc" id="BSUB:BSU37380-MONOMER"/>
<dbReference type="Proteomes" id="UP000001570">
    <property type="component" value="Chromosome"/>
</dbReference>
<dbReference type="GO" id="GO:0005886">
    <property type="term" value="C:plasma membrane"/>
    <property type="evidence" value="ECO:0007669"/>
    <property type="project" value="UniProtKB-SubCell"/>
</dbReference>
<dbReference type="GO" id="GO:0030152">
    <property type="term" value="P:bacteriocin biosynthetic process"/>
    <property type="evidence" value="ECO:0007669"/>
    <property type="project" value="UniProtKB-KW"/>
</dbReference>
<dbReference type="GO" id="GO:0030153">
    <property type="term" value="P:bacteriocin immunity"/>
    <property type="evidence" value="ECO:0007669"/>
    <property type="project" value="UniProtKB-KW"/>
</dbReference>